<comment type="function">
    <text evidence="1">Catalyzes the last two sequential reactions in the de novo biosynthetic pathway for UDP-N-acetylglucosamine (UDP-GlcNAc). The C-terminal domain catalyzes the transfer of acetyl group from acetyl coenzyme A to glucosamine-1-phosphate (GlcN-1-P) to produce N-acetylglucosamine-1-phosphate (GlcNAc-1-P), which is converted into UDP-GlcNAc by the transfer of uridine 5-monophosphate (from uridine 5-triphosphate), a reaction catalyzed by the N-terminal domain.</text>
</comment>
<comment type="catalytic activity">
    <reaction evidence="1">
        <text>alpha-D-glucosamine 1-phosphate + acetyl-CoA = N-acetyl-alpha-D-glucosamine 1-phosphate + CoA + H(+)</text>
        <dbReference type="Rhea" id="RHEA:13725"/>
        <dbReference type="ChEBI" id="CHEBI:15378"/>
        <dbReference type="ChEBI" id="CHEBI:57287"/>
        <dbReference type="ChEBI" id="CHEBI:57288"/>
        <dbReference type="ChEBI" id="CHEBI:57776"/>
        <dbReference type="ChEBI" id="CHEBI:58516"/>
        <dbReference type="EC" id="2.3.1.157"/>
    </reaction>
</comment>
<comment type="catalytic activity">
    <reaction evidence="1">
        <text>N-acetyl-alpha-D-glucosamine 1-phosphate + UTP + H(+) = UDP-N-acetyl-alpha-D-glucosamine + diphosphate</text>
        <dbReference type="Rhea" id="RHEA:13509"/>
        <dbReference type="ChEBI" id="CHEBI:15378"/>
        <dbReference type="ChEBI" id="CHEBI:33019"/>
        <dbReference type="ChEBI" id="CHEBI:46398"/>
        <dbReference type="ChEBI" id="CHEBI:57705"/>
        <dbReference type="ChEBI" id="CHEBI:57776"/>
        <dbReference type="EC" id="2.7.7.23"/>
    </reaction>
</comment>
<comment type="cofactor">
    <cofactor evidence="1">
        <name>Mg(2+)</name>
        <dbReference type="ChEBI" id="CHEBI:18420"/>
    </cofactor>
    <text evidence="1">Binds 1 Mg(2+) ion per subunit.</text>
</comment>
<comment type="pathway">
    <text evidence="1">Nucleotide-sugar biosynthesis; UDP-N-acetyl-alpha-D-glucosamine biosynthesis; N-acetyl-alpha-D-glucosamine 1-phosphate from alpha-D-glucosamine 6-phosphate (route II): step 2/2.</text>
</comment>
<comment type="pathway">
    <text evidence="1">Nucleotide-sugar biosynthesis; UDP-N-acetyl-alpha-D-glucosamine biosynthesis; UDP-N-acetyl-alpha-D-glucosamine from N-acetyl-alpha-D-glucosamine 1-phosphate: step 1/1.</text>
</comment>
<comment type="pathway">
    <text evidence="1">Bacterial outer membrane biogenesis; LPS lipid A biosynthesis.</text>
</comment>
<comment type="subunit">
    <text evidence="1">Homotrimer.</text>
</comment>
<comment type="subcellular location">
    <subcellularLocation>
        <location evidence="1">Cytoplasm</location>
    </subcellularLocation>
</comment>
<comment type="similarity">
    <text evidence="1">In the N-terminal section; belongs to the N-acetylglucosamine-1-phosphate uridyltransferase family.</text>
</comment>
<comment type="similarity">
    <text evidence="1">In the C-terminal section; belongs to the transferase hexapeptide repeat family.</text>
</comment>
<name>GLMU_PELPD</name>
<evidence type="ECO:0000255" key="1">
    <source>
        <dbReference type="HAMAP-Rule" id="MF_01631"/>
    </source>
</evidence>
<keyword id="KW-0012">Acyltransferase</keyword>
<keyword id="KW-0133">Cell shape</keyword>
<keyword id="KW-0961">Cell wall biogenesis/degradation</keyword>
<keyword id="KW-0963">Cytoplasm</keyword>
<keyword id="KW-0460">Magnesium</keyword>
<keyword id="KW-0479">Metal-binding</keyword>
<keyword id="KW-0511">Multifunctional enzyme</keyword>
<keyword id="KW-0548">Nucleotidyltransferase</keyword>
<keyword id="KW-0573">Peptidoglycan synthesis</keyword>
<keyword id="KW-1185">Reference proteome</keyword>
<keyword id="KW-0677">Repeat</keyword>
<keyword id="KW-0808">Transferase</keyword>
<feature type="chain" id="PRO_1000056180" description="Bifunctional protein GlmU">
    <location>
        <begin position="1"/>
        <end position="460"/>
    </location>
</feature>
<feature type="region of interest" description="Pyrophosphorylase" evidence="1">
    <location>
        <begin position="1"/>
        <end position="232"/>
    </location>
</feature>
<feature type="region of interest" description="Linker" evidence="1">
    <location>
        <begin position="233"/>
        <end position="253"/>
    </location>
</feature>
<feature type="region of interest" description="N-acetyltransferase" evidence="1">
    <location>
        <begin position="254"/>
        <end position="460"/>
    </location>
</feature>
<feature type="active site" description="Proton acceptor" evidence="1">
    <location>
        <position position="366"/>
    </location>
</feature>
<feature type="binding site" evidence="1">
    <location>
        <begin position="9"/>
        <end position="12"/>
    </location>
    <ligand>
        <name>UDP-N-acetyl-alpha-D-glucosamine</name>
        <dbReference type="ChEBI" id="CHEBI:57705"/>
    </ligand>
</feature>
<feature type="binding site" evidence="1">
    <location>
        <position position="23"/>
    </location>
    <ligand>
        <name>UDP-N-acetyl-alpha-D-glucosamine</name>
        <dbReference type="ChEBI" id="CHEBI:57705"/>
    </ligand>
</feature>
<feature type="binding site" evidence="1">
    <location>
        <position position="75"/>
    </location>
    <ligand>
        <name>UDP-N-acetyl-alpha-D-glucosamine</name>
        <dbReference type="ChEBI" id="CHEBI:57705"/>
    </ligand>
</feature>
<feature type="binding site" evidence="1">
    <location>
        <begin position="80"/>
        <end position="81"/>
    </location>
    <ligand>
        <name>UDP-N-acetyl-alpha-D-glucosamine</name>
        <dbReference type="ChEBI" id="CHEBI:57705"/>
    </ligand>
</feature>
<feature type="binding site" evidence="1">
    <location>
        <position position="105"/>
    </location>
    <ligand>
        <name>Mg(2+)</name>
        <dbReference type="ChEBI" id="CHEBI:18420"/>
    </ligand>
</feature>
<feature type="binding site" evidence="1">
    <location>
        <position position="142"/>
    </location>
    <ligand>
        <name>UDP-N-acetyl-alpha-D-glucosamine</name>
        <dbReference type="ChEBI" id="CHEBI:57705"/>
    </ligand>
</feature>
<feature type="binding site" evidence="1">
    <location>
        <position position="157"/>
    </location>
    <ligand>
        <name>UDP-N-acetyl-alpha-D-glucosamine</name>
        <dbReference type="ChEBI" id="CHEBI:57705"/>
    </ligand>
</feature>
<feature type="binding site" evidence="1">
    <location>
        <position position="172"/>
    </location>
    <ligand>
        <name>UDP-N-acetyl-alpha-D-glucosamine</name>
        <dbReference type="ChEBI" id="CHEBI:57705"/>
    </ligand>
</feature>
<feature type="binding site" evidence="1">
    <location>
        <position position="230"/>
    </location>
    <ligand>
        <name>Mg(2+)</name>
        <dbReference type="ChEBI" id="CHEBI:18420"/>
    </ligand>
</feature>
<feature type="binding site" evidence="1">
    <location>
        <position position="230"/>
    </location>
    <ligand>
        <name>UDP-N-acetyl-alpha-D-glucosamine</name>
        <dbReference type="ChEBI" id="CHEBI:57705"/>
    </ligand>
</feature>
<feature type="binding site" evidence="1">
    <location>
        <position position="336"/>
    </location>
    <ligand>
        <name>UDP-N-acetyl-alpha-D-glucosamine</name>
        <dbReference type="ChEBI" id="CHEBI:57705"/>
    </ligand>
</feature>
<feature type="binding site" evidence="1">
    <location>
        <position position="354"/>
    </location>
    <ligand>
        <name>UDP-N-acetyl-alpha-D-glucosamine</name>
        <dbReference type="ChEBI" id="CHEBI:57705"/>
    </ligand>
</feature>
<feature type="binding site" evidence="1">
    <location>
        <position position="369"/>
    </location>
    <ligand>
        <name>UDP-N-acetyl-alpha-D-glucosamine</name>
        <dbReference type="ChEBI" id="CHEBI:57705"/>
    </ligand>
</feature>
<feature type="binding site" evidence="1">
    <location>
        <position position="380"/>
    </location>
    <ligand>
        <name>UDP-N-acetyl-alpha-D-glucosamine</name>
        <dbReference type="ChEBI" id="CHEBI:57705"/>
    </ligand>
</feature>
<feature type="binding site" evidence="1">
    <location>
        <begin position="389"/>
        <end position="390"/>
    </location>
    <ligand>
        <name>acetyl-CoA</name>
        <dbReference type="ChEBI" id="CHEBI:57288"/>
    </ligand>
</feature>
<feature type="binding site" evidence="1">
    <location>
        <position position="408"/>
    </location>
    <ligand>
        <name>acetyl-CoA</name>
        <dbReference type="ChEBI" id="CHEBI:57288"/>
    </ligand>
</feature>
<feature type="binding site" evidence="1">
    <location>
        <position position="426"/>
    </location>
    <ligand>
        <name>acetyl-CoA</name>
        <dbReference type="ChEBI" id="CHEBI:57288"/>
    </ligand>
</feature>
<feature type="binding site" evidence="1">
    <location>
        <position position="443"/>
    </location>
    <ligand>
        <name>acetyl-CoA</name>
        <dbReference type="ChEBI" id="CHEBI:57288"/>
    </ligand>
</feature>
<accession>A1ALB2</accession>
<proteinExistence type="inferred from homology"/>
<sequence>MENVAAIILAAGKGTRMKSGLVKVLHPIAGRPMIDWPLEAARGAGAAPVVLVVGHQAEAVRERFQGAGDIACALQAEQLGTGHAVACAAPALAGFSGTVLILCGDTPLLRGGTLTDLLAFHRSQGAAVTVLTARMENPHGYGRVLRDEAGRVLRIVEQKDASPQECSVREINSGIYCMEAGFLFDNIGSLGNDNAQNEFYLTDLVAMAAQKGATCLAMAIEDSDEIMGVNDRAQLAQAARILRRRINRDLMLSGVSLVDPEQTYIDQGVVIGPDTLIHPNCSISGPTQIGNGCQIESGVSISSCRIGDRCRIKAGSVLEDSELRADVAVGPMAHLRPGTVLNDHVKIGNFVETKKTVMGEGSKASHLTYLGDAEIGRDVNIGCGTITCNYDGVKKHRTLIGDNVFVGSDVQLVAPVRVGADSLIAAGTTVTRDVPAGSLAISRTPQVNREGWRIRMKKKT</sequence>
<reference key="1">
    <citation type="submission" date="2006-10" db="EMBL/GenBank/DDBJ databases">
        <title>Complete sequence of chromosome of Pelobacter propionicus DSM 2379.</title>
        <authorList>
            <consortium name="US DOE Joint Genome Institute"/>
            <person name="Copeland A."/>
            <person name="Lucas S."/>
            <person name="Lapidus A."/>
            <person name="Barry K."/>
            <person name="Detter J.C."/>
            <person name="Glavina del Rio T."/>
            <person name="Hammon N."/>
            <person name="Israni S."/>
            <person name="Dalin E."/>
            <person name="Tice H."/>
            <person name="Pitluck S."/>
            <person name="Saunders E."/>
            <person name="Brettin T."/>
            <person name="Bruce D."/>
            <person name="Han C."/>
            <person name="Tapia R."/>
            <person name="Schmutz J."/>
            <person name="Larimer F."/>
            <person name="Land M."/>
            <person name="Hauser L."/>
            <person name="Kyrpides N."/>
            <person name="Kim E."/>
            <person name="Lovley D."/>
            <person name="Richardson P."/>
        </authorList>
    </citation>
    <scope>NUCLEOTIDE SEQUENCE [LARGE SCALE GENOMIC DNA]</scope>
    <source>
        <strain>DSM 2379 / NBRC 103807 / OttBd1</strain>
    </source>
</reference>
<protein>
    <recommendedName>
        <fullName evidence="1">Bifunctional protein GlmU</fullName>
    </recommendedName>
    <domain>
        <recommendedName>
            <fullName evidence="1">UDP-N-acetylglucosamine pyrophosphorylase</fullName>
            <ecNumber evidence="1">2.7.7.23</ecNumber>
        </recommendedName>
        <alternativeName>
            <fullName evidence="1">N-acetylglucosamine-1-phosphate uridyltransferase</fullName>
        </alternativeName>
    </domain>
    <domain>
        <recommendedName>
            <fullName evidence="1">Glucosamine-1-phosphate N-acetyltransferase</fullName>
            <ecNumber evidence="1">2.3.1.157</ecNumber>
        </recommendedName>
    </domain>
</protein>
<gene>
    <name evidence="1" type="primary">glmU</name>
    <name type="ordered locus">Ppro_0501</name>
</gene>
<organism>
    <name type="scientific">Pelobacter propionicus (strain DSM 2379 / NBRC 103807 / OttBd1)</name>
    <dbReference type="NCBI Taxonomy" id="338966"/>
    <lineage>
        <taxon>Bacteria</taxon>
        <taxon>Pseudomonadati</taxon>
        <taxon>Thermodesulfobacteriota</taxon>
        <taxon>Desulfuromonadia</taxon>
        <taxon>Desulfuromonadales</taxon>
        <taxon>Desulfuromonadaceae</taxon>
        <taxon>Pelobacter</taxon>
    </lineage>
</organism>
<dbReference type="EC" id="2.7.7.23" evidence="1"/>
<dbReference type="EC" id="2.3.1.157" evidence="1"/>
<dbReference type="EMBL" id="CP000482">
    <property type="protein sequence ID" value="ABK98132.1"/>
    <property type="molecule type" value="Genomic_DNA"/>
</dbReference>
<dbReference type="RefSeq" id="WP_011734446.1">
    <property type="nucleotide sequence ID" value="NC_008609.1"/>
</dbReference>
<dbReference type="SMR" id="A1ALB2"/>
<dbReference type="STRING" id="338966.Ppro_0501"/>
<dbReference type="KEGG" id="ppd:Ppro_0501"/>
<dbReference type="eggNOG" id="COG1207">
    <property type="taxonomic scope" value="Bacteria"/>
</dbReference>
<dbReference type="HOGENOM" id="CLU_029499_15_2_7"/>
<dbReference type="OrthoDB" id="9775031at2"/>
<dbReference type="UniPathway" id="UPA00113">
    <property type="reaction ID" value="UER00532"/>
</dbReference>
<dbReference type="UniPathway" id="UPA00113">
    <property type="reaction ID" value="UER00533"/>
</dbReference>
<dbReference type="UniPathway" id="UPA00973"/>
<dbReference type="Proteomes" id="UP000006732">
    <property type="component" value="Chromosome"/>
</dbReference>
<dbReference type="GO" id="GO:0005737">
    <property type="term" value="C:cytoplasm"/>
    <property type="evidence" value="ECO:0007669"/>
    <property type="project" value="UniProtKB-SubCell"/>
</dbReference>
<dbReference type="GO" id="GO:0016020">
    <property type="term" value="C:membrane"/>
    <property type="evidence" value="ECO:0007669"/>
    <property type="project" value="GOC"/>
</dbReference>
<dbReference type="GO" id="GO:0019134">
    <property type="term" value="F:glucosamine-1-phosphate N-acetyltransferase activity"/>
    <property type="evidence" value="ECO:0007669"/>
    <property type="project" value="UniProtKB-UniRule"/>
</dbReference>
<dbReference type="GO" id="GO:0000287">
    <property type="term" value="F:magnesium ion binding"/>
    <property type="evidence" value="ECO:0007669"/>
    <property type="project" value="UniProtKB-UniRule"/>
</dbReference>
<dbReference type="GO" id="GO:0003977">
    <property type="term" value="F:UDP-N-acetylglucosamine diphosphorylase activity"/>
    <property type="evidence" value="ECO:0007669"/>
    <property type="project" value="UniProtKB-UniRule"/>
</dbReference>
<dbReference type="GO" id="GO:0000902">
    <property type="term" value="P:cell morphogenesis"/>
    <property type="evidence" value="ECO:0007669"/>
    <property type="project" value="UniProtKB-UniRule"/>
</dbReference>
<dbReference type="GO" id="GO:0071555">
    <property type="term" value="P:cell wall organization"/>
    <property type="evidence" value="ECO:0007669"/>
    <property type="project" value="UniProtKB-KW"/>
</dbReference>
<dbReference type="GO" id="GO:0009245">
    <property type="term" value="P:lipid A biosynthetic process"/>
    <property type="evidence" value="ECO:0007669"/>
    <property type="project" value="UniProtKB-UniRule"/>
</dbReference>
<dbReference type="GO" id="GO:0009252">
    <property type="term" value="P:peptidoglycan biosynthetic process"/>
    <property type="evidence" value="ECO:0007669"/>
    <property type="project" value="UniProtKB-UniRule"/>
</dbReference>
<dbReference type="GO" id="GO:0008360">
    <property type="term" value="P:regulation of cell shape"/>
    <property type="evidence" value="ECO:0007669"/>
    <property type="project" value="UniProtKB-KW"/>
</dbReference>
<dbReference type="GO" id="GO:0006048">
    <property type="term" value="P:UDP-N-acetylglucosamine biosynthetic process"/>
    <property type="evidence" value="ECO:0007669"/>
    <property type="project" value="UniProtKB-UniPathway"/>
</dbReference>
<dbReference type="CDD" id="cd02540">
    <property type="entry name" value="GT2_GlmU_N_bac"/>
    <property type="match status" value="1"/>
</dbReference>
<dbReference type="CDD" id="cd03353">
    <property type="entry name" value="LbH_GlmU_C"/>
    <property type="match status" value="1"/>
</dbReference>
<dbReference type="Gene3D" id="2.160.10.10">
    <property type="entry name" value="Hexapeptide repeat proteins"/>
    <property type="match status" value="1"/>
</dbReference>
<dbReference type="Gene3D" id="3.90.550.10">
    <property type="entry name" value="Spore Coat Polysaccharide Biosynthesis Protein SpsA, Chain A"/>
    <property type="match status" value="1"/>
</dbReference>
<dbReference type="HAMAP" id="MF_01631">
    <property type="entry name" value="GlmU"/>
    <property type="match status" value="1"/>
</dbReference>
<dbReference type="InterPro" id="IPR005882">
    <property type="entry name" value="Bifunctional_GlmU"/>
</dbReference>
<dbReference type="InterPro" id="IPR050065">
    <property type="entry name" value="GlmU-like"/>
</dbReference>
<dbReference type="InterPro" id="IPR038009">
    <property type="entry name" value="GlmU_C_LbH"/>
</dbReference>
<dbReference type="InterPro" id="IPR001451">
    <property type="entry name" value="Hexapep"/>
</dbReference>
<dbReference type="InterPro" id="IPR018357">
    <property type="entry name" value="Hexapep_transf_CS"/>
</dbReference>
<dbReference type="InterPro" id="IPR005835">
    <property type="entry name" value="NTP_transferase_dom"/>
</dbReference>
<dbReference type="InterPro" id="IPR029044">
    <property type="entry name" value="Nucleotide-diphossugar_trans"/>
</dbReference>
<dbReference type="InterPro" id="IPR011004">
    <property type="entry name" value="Trimer_LpxA-like_sf"/>
</dbReference>
<dbReference type="NCBIfam" id="TIGR01173">
    <property type="entry name" value="glmU"/>
    <property type="match status" value="1"/>
</dbReference>
<dbReference type="NCBIfam" id="NF010934">
    <property type="entry name" value="PRK14354.1"/>
    <property type="match status" value="1"/>
</dbReference>
<dbReference type="NCBIfam" id="NF010935">
    <property type="entry name" value="PRK14355.1"/>
    <property type="match status" value="1"/>
</dbReference>
<dbReference type="PANTHER" id="PTHR43584:SF3">
    <property type="entry name" value="BIFUNCTIONAL PROTEIN GLMU"/>
    <property type="match status" value="1"/>
</dbReference>
<dbReference type="PANTHER" id="PTHR43584">
    <property type="entry name" value="NUCLEOTIDYL TRANSFERASE"/>
    <property type="match status" value="1"/>
</dbReference>
<dbReference type="Pfam" id="PF00132">
    <property type="entry name" value="Hexapep"/>
    <property type="match status" value="2"/>
</dbReference>
<dbReference type="Pfam" id="PF00483">
    <property type="entry name" value="NTP_transferase"/>
    <property type="match status" value="1"/>
</dbReference>
<dbReference type="SUPFAM" id="SSF53448">
    <property type="entry name" value="Nucleotide-diphospho-sugar transferases"/>
    <property type="match status" value="1"/>
</dbReference>
<dbReference type="SUPFAM" id="SSF51161">
    <property type="entry name" value="Trimeric LpxA-like enzymes"/>
    <property type="match status" value="1"/>
</dbReference>
<dbReference type="PROSITE" id="PS00101">
    <property type="entry name" value="HEXAPEP_TRANSFERASES"/>
    <property type="match status" value="1"/>
</dbReference>